<protein>
    <recommendedName>
        <fullName evidence="1">tRNA modification GTPase MnmE</fullName>
        <ecNumber evidence="1">3.6.-.-</ecNumber>
    </recommendedName>
</protein>
<gene>
    <name evidence="1" type="primary">mnmE</name>
    <name evidence="1" type="synonym">trmE</name>
    <name type="ordered locus">FTN_1298</name>
</gene>
<organism>
    <name type="scientific">Francisella tularensis subsp. novicida (strain U112)</name>
    <dbReference type="NCBI Taxonomy" id="401614"/>
    <lineage>
        <taxon>Bacteria</taxon>
        <taxon>Pseudomonadati</taxon>
        <taxon>Pseudomonadota</taxon>
        <taxon>Gammaproteobacteria</taxon>
        <taxon>Thiotrichales</taxon>
        <taxon>Francisellaceae</taxon>
        <taxon>Francisella</taxon>
    </lineage>
</organism>
<feature type="chain" id="PRO_1000060043" description="tRNA modification GTPase MnmE">
    <location>
        <begin position="1"/>
        <end position="450"/>
    </location>
</feature>
<feature type="domain" description="TrmE-type G">
    <location>
        <begin position="214"/>
        <end position="374"/>
    </location>
</feature>
<feature type="binding site" evidence="1">
    <location>
        <position position="23"/>
    </location>
    <ligand>
        <name>(6S)-5-formyl-5,6,7,8-tetrahydrofolate</name>
        <dbReference type="ChEBI" id="CHEBI:57457"/>
    </ligand>
</feature>
<feature type="binding site" evidence="1">
    <location>
        <position position="79"/>
    </location>
    <ligand>
        <name>(6S)-5-formyl-5,6,7,8-tetrahydrofolate</name>
        <dbReference type="ChEBI" id="CHEBI:57457"/>
    </ligand>
</feature>
<feature type="binding site" evidence="1">
    <location>
        <position position="118"/>
    </location>
    <ligand>
        <name>(6S)-5-formyl-5,6,7,8-tetrahydrofolate</name>
        <dbReference type="ChEBI" id="CHEBI:57457"/>
    </ligand>
</feature>
<feature type="binding site" evidence="1">
    <location>
        <begin position="224"/>
        <end position="229"/>
    </location>
    <ligand>
        <name>GTP</name>
        <dbReference type="ChEBI" id="CHEBI:37565"/>
    </ligand>
</feature>
<feature type="binding site" evidence="1">
    <location>
        <position position="224"/>
    </location>
    <ligand>
        <name>K(+)</name>
        <dbReference type="ChEBI" id="CHEBI:29103"/>
    </ligand>
</feature>
<feature type="binding site" evidence="1">
    <location>
        <position position="228"/>
    </location>
    <ligand>
        <name>Mg(2+)</name>
        <dbReference type="ChEBI" id="CHEBI:18420"/>
    </ligand>
</feature>
<feature type="binding site" evidence="1">
    <location>
        <begin position="243"/>
        <end position="249"/>
    </location>
    <ligand>
        <name>GTP</name>
        <dbReference type="ChEBI" id="CHEBI:37565"/>
    </ligand>
</feature>
<feature type="binding site" evidence="1">
    <location>
        <position position="243"/>
    </location>
    <ligand>
        <name>K(+)</name>
        <dbReference type="ChEBI" id="CHEBI:29103"/>
    </ligand>
</feature>
<feature type="binding site" evidence="1">
    <location>
        <position position="245"/>
    </location>
    <ligand>
        <name>K(+)</name>
        <dbReference type="ChEBI" id="CHEBI:29103"/>
    </ligand>
</feature>
<feature type="binding site" evidence="1">
    <location>
        <position position="248"/>
    </location>
    <ligand>
        <name>K(+)</name>
        <dbReference type="ChEBI" id="CHEBI:29103"/>
    </ligand>
</feature>
<feature type="binding site" evidence="1">
    <location>
        <position position="249"/>
    </location>
    <ligand>
        <name>Mg(2+)</name>
        <dbReference type="ChEBI" id="CHEBI:18420"/>
    </ligand>
</feature>
<feature type="binding site" evidence="1">
    <location>
        <begin position="268"/>
        <end position="271"/>
    </location>
    <ligand>
        <name>GTP</name>
        <dbReference type="ChEBI" id="CHEBI:37565"/>
    </ligand>
</feature>
<feature type="binding site" evidence="1">
    <location>
        <position position="450"/>
    </location>
    <ligand>
        <name>(6S)-5-formyl-5,6,7,8-tetrahydrofolate</name>
        <dbReference type="ChEBI" id="CHEBI:57457"/>
    </ligand>
</feature>
<sequence>MYTKDTIVAIATPQGNGGIGIIRISGIDALAIAEKLTKKQLKPRYATFCNVYNDNEIIDHGIVIFFKAPLSYTGEDVVEIQAHGNPFILNLIIKAALNCGARMAKAGEFTERAFLNNKLDLTQAEAVADIINASSEIAAKSAAKSLQGDFSKEINNLLEKLIYLRMYVEASIDFPEEEINFLEDQKIHSSLEEIYKVILAVKNSCKQGVILAEGITLILVGKPNAGKSSLLNALAGKESAIVTSIAGTTRDIVKEHIQINGVPMHIIDTAGLRNSDDIIESEGIKRAIKKIQEADQVLFVTDDYTNSQVKFSDIKEIIPEFYDQIPKDIDITYVHNKIDLLKEVPHNHANHIYISAENNIGIDKLKEHILNKVGYTNQNESIYTARERHVTAINNAFEHIKLAKEQLELGNGELLAEELLIVQEYLNSITGEFSSDDLLGEIFSSFCIGK</sequence>
<comment type="function">
    <text evidence="1">Exhibits a very high intrinsic GTPase hydrolysis rate. Involved in the addition of a carboxymethylaminomethyl (cmnm) group at the wobble position (U34) of certain tRNAs, forming tRNA-cmnm(5)s(2)U34.</text>
</comment>
<comment type="cofactor">
    <cofactor evidence="1">
        <name>K(+)</name>
        <dbReference type="ChEBI" id="CHEBI:29103"/>
    </cofactor>
    <text evidence="1">Binds 1 potassium ion per subunit.</text>
</comment>
<comment type="subunit">
    <text evidence="1">Homodimer. Heterotetramer of two MnmE and two MnmG subunits.</text>
</comment>
<comment type="subcellular location">
    <subcellularLocation>
        <location evidence="1">Cytoplasm</location>
    </subcellularLocation>
</comment>
<comment type="similarity">
    <text evidence="1">Belongs to the TRAFAC class TrmE-Era-EngA-EngB-Septin-like GTPase superfamily. TrmE GTPase family.</text>
</comment>
<accession>A0Q7G4</accession>
<reference key="1">
    <citation type="journal article" date="2007" name="Genome Biol.">
        <title>Comparison of Francisella tularensis genomes reveals evolutionary events associated with the emergence of human pathogenic strains.</title>
        <authorList>
            <person name="Rohmer L."/>
            <person name="Fong C."/>
            <person name="Abmayr S."/>
            <person name="Wasnick M."/>
            <person name="Larson Freeman T.J."/>
            <person name="Radey M."/>
            <person name="Guina T."/>
            <person name="Svensson K."/>
            <person name="Hayden H.S."/>
            <person name="Jacobs M."/>
            <person name="Gallagher L.A."/>
            <person name="Manoil C."/>
            <person name="Ernst R.K."/>
            <person name="Drees B."/>
            <person name="Buckley D."/>
            <person name="Haugen E."/>
            <person name="Bovee D."/>
            <person name="Zhou Y."/>
            <person name="Chang J."/>
            <person name="Levy R."/>
            <person name="Lim R."/>
            <person name="Gillett W."/>
            <person name="Guenthener D."/>
            <person name="Kang A."/>
            <person name="Shaffer S.A."/>
            <person name="Taylor G."/>
            <person name="Chen J."/>
            <person name="Gallis B."/>
            <person name="D'Argenio D.A."/>
            <person name="Forsman M."/>
            <person name="Olson M.V."/>
            <person name="Goodlett D.R."/>
            <person name="Kaul R."/>
            <person name="Miller S.I."/>
            <person name="Brittnacher M.J."/>
        </authorList>
    </citation>
    <scope>NUCLEOTIDE SEQUENCE [LARGE SCALE GENOMIC DNA]</scope>
    <source>
        <strain>U112</strain>
    </source>
</reference>
<dbReference type="EC" id="3.6.-.-" evidence="1"/>
<dbReference type="EMBL" id="CP000439">
    <property type="protein sequence ID" value="ABK90179.1"/>
    <property type="molecule type" value="Genomic_DNA"/>
</dbReference>
<dbReference type="RefSeq" id="WP_003040096.1">
    <property type="nucleotide sequence ID" value="NC_008601.1"/>
</dbReference>
<dbReference type="SMR" id="A0Q7G4"/>
<dbReference type="KEGG" id="ftn:FTN_1298"/>
<dbReference type="KEGG" id="ftx:AW25_708"/>
<dbReference type="BioCyc" id="FTUL401614:G1G75-1343-MONOMER"/>
<dbReference type="Proteomes" id="UP000000762">
    <property type="component" value="Chromosome"/>
</dbReference>
<dbReference type="GO" id="GO:0005829">
    <property type="term" value="C:cytosol"/>
    <property type="evidence" value="ECO:0007669"/>
    <property type="project" value="TreeGrafter"/>
</dbReference>
<dbReference type="GO" id="GO:0005525">
    <property type="term" value="F:GTP binding"/>
    <property type="evidence" value="ECO:0007669"/>
    <property type="project" value="UniProtKB-UniRule"/>
</dbReference>
<dbReference type="GO" id="GO:0003924">
    <property type="term" value="F:GTPase activity"/>
    <property type="evidence" value="ECO:0007669"/>
    <property type="project" value="UniProtKB-UniRule"/>
</dbReference>
<dbReference type="GO" id="GO:0046872">
    <property type="term" value="F:metal ion binding"/>
    <property type="evidence" value="ECO:0007669"/>
    <property type="project" value="UniProtKB-KW"/>
</dbReference>
<dbReference type="GO" id="GO:0030488">
    <property type="term" value="P:tRNA methylation"/>
    <property type="evidence" value="ECO:0007669"/>
    <property type="project" value="TreeGrafter"/>
</dbReference>
<dbReference type="GO" id="GO:0002098">
    <property type="term" value="P:tRNA wobble uridine modification"/>
    <property type="evidence" value="ECO:0007669"/>
    <property type="project" value="TreeGrafter"/>
</dbReference>
<dbReference type="CDD" id="cd04164">
    <property type="entry name" value="trmE"/>
    <property type="match status" value="1"/>
</dbReference>
<dbReference type="CDD" id="cd14858">
    <property type="entry name" value="TrmE_N"/>
    <property type="match status" value="1"/>
</dbReference>
<dbReference type="Gene3D" id="3.40.50.300">
    <property type="entry name" value="P-loop containing nucleotide triphosphate hydrolases"/>
    <property type="match status" value="1"/>
</dbReference>
<dbReference type="Gene3D" id="3.30.1360.120">
    <property type="entry name" value="Probable tRNA modification gtpase trme, domain 1"/>
    <property type="match status" value="1"/>
</dbReference>
<dbReference type="Gene3D" id="1.20.120.430">
    <property type="entry name" value="tRNA modification GTPase MnmE domain 2"/>
    <property type="match status" value="1"/>
</dbReference>
<dbReference type="HAMAP" id="MF_00379">
    <property type="entry name" value="GTPase_MnmE"/>
    <property type="match status" value="1"/>
</dbReference>
<dbReference type="InterPro" id="IPR031168">
    <property type="entry name" value="G_TrmE"/>
</dbReference>
<dbReference type="InterPro" id="IPR006073">
    <property type="entry name" value="GTP-bd"/>
</dbReference>
<dbReference type="InterPro" id="IPR018948">
    <property type="entry name" value="GTP-bd_TrmE_N"/>
</dbReference>
<dbReference type="InterPro" id="IPR004520">
    <property type="entry name" value="GTPase_MnmE"/>
</dbReference>
<dbReference type="InterPro" id="IPR027368">
    <property type="entry name" value="MnmE_dom2"/>
</dbReference>
<dbReference type="InterPro" id="IPR025867">
    <property type="entry name" value="MnmE_helical"/>
</dbReference>
<dbReference type="InterPro" id="IPR027417">
    <property type="entry name" value="P-loop_NTPase"/>
</dbReference>
<dbReference type="InterPro" id="IPR005225">
    <property type="entry name" value="Small_GTP-bd"/>
</dbReference>
<dbReference type="InterPro" id="IPR027266">
    <property type="entry name" value="TrmE/GcvT_dom1"/>
</dbReference>
<dbReference type="NCBIfam" id="TIGR00450">
    <property type="entry name" value="mnmE_trmE_thdF"/>
    <property type="match status" value="1"/>
</dbReference>
<dbReference type="NCBIfam" id="NF003661">
    <property type="entry name" value="PRK05291.1-3"/>
    <property type="match status" value="1"/>
</dbReference>
<dbReference type="NCBIfam" id="TIGR00231">
    <property type="entry name" value="small_GTP"/>
    <property type="match status" value="1"/>
</dbReference>
<dbReference type="PANTHER" id="PTHR42714">
    <property type="entry name" value="TRNA MODIFICATION GTPASE GTPBP3"/>
    <property type="match status" value="1"/>
</dbReference>
<dbReference type="PANTHER" id="PTHR42714:SF2">
    <property type="entry name" value="TRNA MODIFICATION GTPASE GTPBP3, MITOCHONDRIAL"/>
    <property type="match status" value="1"/>
</dbReference>
<dbReference type="Pfam" id="PF01926">
    <property type="entry name" value="MMR_HSR1"/>
    <property type="match status" value="1"/>
</dbReference>
<dbReference type="Pfam" id="PF12631">
    <property type="entry name" value="MnmE_helical"/>
    <property type="match status" value="1"/>
</dbReference>
<dbReference type="Pfam" id="PF10396">
    <property type="entry name" value="TrmE_N"/>
    <property type="match status" value="1"/>
</dbReference>
<dbReference type="PRINTS" id="PR00326">
    <property type="entry name" value="GTP1OBG"/>
</dbReference>
<dbReference type="SUPFAM" id="SSF52540">
    <property type="entry name" value="P-loop containing nucleoside triphosphate hydrolases"/>
    <property type="match status" value="1"/>
</dbReference>
<dbReference type="SUPFAM" id="SSF116878">
    <property type="entry name" value="TrmE connector domain"/>
    <property type="match status" value="1"/>
</dbReference>
<dbReference type="PROSITE" id="PS51709">
    <property type="entry name" value="G_TRME"/>
    <property type="match status" value="1"/>
</dbReference>
<evidence type="ECO:0000255" key="1">
    <source>
        <dbReference type="HAMAP-Rule" id="MF_00379"/>
    </source>
</evidence>
<proteinExistence type="inferred from homology"/>
<keyword id="KW-0963">Cytoplasm</keyword>
<keyword id="KW-0342">GTP-binding</keyword>
<keyword id="KW-0378">Hydrolase</keyword>
<keyword id="KW-0460">Magnesium</keyword>
<keyword id="KW-0479">Metal-binding</keyword>
<keyword id="KW-0547">Nucleotide-binding</keyword>
<keyword id="KW-0630">Potassium</keyword>
<keyword id="KW-0819">tRNA processing</keyword>
<name>MNME_FRATN</name>